<feature type="chain" id="PRO_1000136103" description="Glycerol-3-phosphate acyltransferase">
    <location>
        <begin position="1"/>
        <end position="200"/>
    </location>
</feature>
<feature type="transmembrane region" description="Helical" evidence="1">
    <location>
        <begin position="2"/>
        <end position="22"/>
    </location>
</feature>
<feature type="transmembrane region" description="Helical" evidence="1">
    <location>
        <begin position="51"/>
        <end position="71"/>
    </location>
</feature>
<feature type="transmembrane region" description="Helical" evidence="1">
    <location>
        <begin position="84"/>
        <end position="104"/>
    </location>
</feature>
<feature type="transmembrane region" description="Helical" evidence="1">
    <location>
        <begin position="114"/>
        <end position="134"/>
    </location>
</feature>
<feature type="transmembrane region" description="Helical" evidence="1">
    <location>
        <begin position="158"/>
        <end position="178"/>
    </location>
</feature>
<sequence>MFNIPAVAVSYLIGSLSFAVIVSKYYGMDDPRTYGSGNPGATNVLRSGKKKAAALTLLGDAAKGLVAVLLARVLQEPLGLSDSAIAAVALAALVGHMWPVFFGFKGGKGVATALGVLLALSPATALVCALIWLVMAFGFKVSSLAALVATTAAPLAALFFMPHTSWIFATLAIAILVLLRHKSNILNLIKGKESKIGEKR</sequence>
<comment type="function">
    <text evidence="1">Catalyzes the transfer of an acyl group from acyl-phosphate (acyl-PO(4)) to glycerol-3-phosphate (G3P) to form lysophosphatidic acid (LPA). This enzyme utilizes acyl-phosphate as fatty acyl donor, but not acyl-CoA or acyl-ACP.</text>
</comment>
<comment type="catalytic activity">
    <reaction evidence="1">
        <text>an acyl phosphate + sn-glycerol 3-phosphate = a 1-acyl-sn-glycero-3-phosphate + phosphate</text>
        <dbReference type="Rhea" id="RHEA:34075"/>
        <dbReference type="ChEBI" id="CHEBI:43474"/>
        <dbReference type="ChEBI" id="CHEBI:57597"/>
        <dbReference type="ChEBI" id="CHEBI:57970"/>
        <dbReference type="ChEBI" id="CHEBI:59918"/>
        <dbReference type="EC" id="2.3.1.275"/>
    </reaction>
</comment>
<comment type="pathway">
    <text evidence="1">Lipid metabolism; phospholipid metabolism.</text>
</comment>
<comment type="subunit">
    <text evidence="1">Probably interacts with PlsX.</text>
</comment>
<comment type="subcellular location">
    <subcellularLocation>
        <location evidence="1">Cell inner membrane</location>
        <topology evidence="1">Multi-pass membrane protein</topology>
    </subcellularLocation>
</comment>
<comment type="similarity">
    <text evidence="1">Belongs to the PlsY family.</text>
</comment>
<gene>
    <name evidence="1" type="primary">plsY</name>
    <name type="ordered locus">NGK_0948</name>
</gene>
<protein>
    <recommendedName>
        <fullName evidence="1">Glycerol-3-phosphate acyltransferase</fullName>
    </recommendedName>
    <alternativeName>
        <fullName evidence="1">Acyl-PO4 G3P acyltransferase</fullName>
    </alternativeName>
    <alternativeName>
        <fullName evidence="1">Acyl-phosphate--glycerol-3-phosphate acyltransferase</fullName>
    </alternativeName>
    <alternativeName>
        <fullName evidence="1">G3P acyltransferase</fullName>
        <shortName evidence="1">GPAT</shortName>
        <ecNumber evidence="1">2.3.1.275</ecNumber>
    </alternativeName>
    <alternativeName>
        <fullName evidence="1">Lysophosphatidic acid synthase</fullName>
        <shortName evidence="1">LPA synthase</shortName>
    </alternativeName>
</protein>
<organism>
    <name type="scientific">Neisseria gonorrhoeae (strain NCCP11945)</name>
    <dbReference type="NCBI Taxonomy" id="521006"/>
    <lineage>
        <taxon>Bacteria</taxon>
        <taxon>Pseudomonadati</taxon>
        <taxon>Pseudomonadota</taxon>
        <taxon>Betaproteobacteria</taxon>
        <taxon>Neisseriales</taxon>
        <taxon>Neisseriaceae</taxon>
        <taxon>Neisseria</taxon>
    </lineage>
</organism>
<evidence type="ECO:0000255" key="1">
    <source>
        <dbReference type="HAMAP-Rule" id="MF_01043"/>
    </source>
</evidence>
<accession>B4RLD8</accession>
<keyword id="KW-0997">Cell inner membrane</keyword>
<keyword id="KW-1003">Cell membrane</keyword>
<keyword id="KW-0444">Lipid biosynthesis</keyword>
<keyword id="KW-0443">Lipid metabolism</keyword>
<keyword id="KW-0472">Membrane</keyword>
<keyword id="KW-0594">Phospholipid biosynthesis</keyword>
<keyword id="KW-1208">Phospholipid metabolism</keyword>
<keyword id="KW-0808">Transferase</keyword>
<keyword id="KW-0812">Transmembrane</keyword>
<keyword id="KW-1133">Transmembrane helix</keyword>
<dbReference type="EC" id="2.3.1.275" evidence="1"/>
<dbReference type="EMBL" id="CP001050">
    <property type="protein sequence ID" value="ACF29625.1"/>
    <property type="molecule type" value="Genomic_DNA"/>
</dbReference>
<dbReference type="RefSeq" id="WP_003691121.1">
    <property type="nucleotide sequence ID" value="NC_011035.1"/>
</dbReference>
<dbReference type="SMR" id="B4RLD8"/>
<dbReference type="GeneID" id="66753189"/>
<dbReference type="KEGG" id="ngk:NGK_0948"/>
<dbReference type="HOGENOM" id="CLU_081254_0_0_4"/>
<dbReference type="UniPathway" id="UPA00085"/>
<dbReference type="Proteomes" id="UP000002564">
    <property type="component" value="Chromosome"/>
</dbReference>
<dbReference type="GO" id="GO:0005886">
    <property type="term" value="C:plasma membrane"/>
    <property type="evidence" value="ECO:0007669"/>
    <property type="project" value="UniProtKB-SubCell"/>
</dbReference>
<dbReference type="GO" id="GO:0043772">
    <property type="term" value="F:acyl-phosphate glycerol-3-phosphate acyltransferase activity"/>
    <property type="evidence" value="ECO:0007669"/>
    <property type="project" value="UniProtKB-UniRule"/>
</dbReference>
<dbReference type="GO" id="GO:0008654">
    <property type="term" value="P:phospholipid biosynthetic process"/>
    <property type="evidence" value="ECO:0007669"/>
    <property type="project" value="UniProtKB-UniRule"/>
</dbReference>
<dbReference type="HAMAP" id="MF_01043">
    <property type="entry name" value="PlsY"/>
    <property type="match status" value="1"/>
</dbReference>
<dbReference type="InterPro" id="IPR003811">
    <property type="entry name" value="G3P_acylTferase_PlsY"/>
</dbReference>
<dbReference type="NCBIfam" id="TIGR00023">
    <property type="entry name" value="glycerol-3-phosphate 1-O-acyltransferase PlsY"/>
    <property type="match status" value="1"/>
</dbReference>
<dbReference type="PANTHER" id="PTHR30309:SF0">
    <property type="entry name" value="GLYCEROL-3-PHOSPHATE ACYLTRANSFERASE-RELATED"/>
    <property type="match status" value="1"/>
</dbReference>
<dbReference type="PANTHER" id="PTHR30309">
    <property type="entry name" value="INNER MEMBRANE PROTEIN YGIH"/>
    <property type="match status" value="1"/>
</dbReference>
<dbReference type="Pfam" id="PF02660">
    <property type="entry name" value="G3P_acyltransf"/>
    <property type="match status" value="1"/>
</dbReference>
<dbReference type="SMART" id="SM01207">
    <property type="entry name" value="G3P_acyltransf"/>
    <property type="match status" value="1"/>
</dbReference>
<reference key="1">
    <citation type="journal article" date="2008" name="J. Bacteriol.">
        <title>Complete genome sequence of Neisseria gonorrhoeae NCCP11945.</title>
        <authorList>
            <person name="Chung G.T."/>
            <person name="Yoo J.S."/>
            <person name="Oh H.B."/>
            <person name="Lee Y.S."/>
            <person name="Cha S.H."/>
            <person name="Kim S.J."/>
            <person name="Yoo C.K."/>
        </authorList>
    </citation>
    <scope>NUCLEOTIDE SEQUENCE [LARGE SCALE GENOMIC DNA]</scope>
    <source>
        <strain>NCCP11945</strain>
    </source>
</reference>
<name>PLSY_NEIG2</name>
<proteinExistence type="inferred from homology"/>